<feature type="chain" id="PRO_0000223820" description="Acetyl-coenzyme A carboxylase carboxyl transferase subunit alpha">
    <location>
        <begin position="1"/>
        <end position="319"/>
    </location>
</feature>
<feature type="domain" description="CoA carboxyltransferase C-terminal" evidence="2">
    <location>
        <begin position="35"/>
        <end position="296"/>
    </location>
</feature>
<gene>
    <name evidence="1" type="primary">accA</name>
    <name type="ordered locus">SCH_0232</name>
</gene>
<keyword id="KW-0067">ATP-binding</keyword>
<keyword id="KW-0963">Cytoplasm</keyword>
<keyword id="KW-0275">Fatty acid biosynthesis</keyword>
<keyword id="KW-0276">Fatty acid metabolism</keyword>
<keyword id="KW-0444">Lipid biosynthesis</keyword>
<keyword id="KW-0443">Lipid metabolism</keyword>
<keyword id="KW-0547">Nucleotide-binding</keyword>
<keyword id="KW-0808">Transferase</keyword>
<name>ACCA_SALCH</name>
<organism>
    <name type="scientific">Salmonella choleraesuis (strain SC-B67)</name>
    <dbReference type="NCBI Taxonomy" id="321314"/>
    <lineage>
        <taxon>Bacteria</taxon>
        <taxon>Pseudomonadati</taxon>
        <taxon>Pseudomonadota</taxon>
        <taxon>Gammaproteobacteria</taxon>
        <taxon>Enterobacterales</taxon>
        <taxon>Enterobacteriaceae</taxon>
        <taxon>Salmonella</taxon>
    </lineage>
</organism>
<accession>Q57T23</accession>
<protein>
    <recommendedName>
        <fullName evidence="1">Acetyl-coenzyme A carboxylase carboxyl transferase subunit alpha</fullName>
        <shortName evidence="1">ACCase subunit alpha</shortName>
        <shortName evidence="1">Acetyl-CoA carboxylase carboxyltransferase subunit alpha</shortName>
        <ecNumber evidence="1">2.1.3.15</ecNumber>
    </recommendedName>
</protein>
<dbReference type="EC" id="2.1.3.15" evidence="1"/>
<dbReference type="EMBL" id="AE017220">
    <property type="protein sequence ID" value="AAX64138.1"/>
    <property type="molecule type" value="Genomic_DNA"/>
</dbReference>
<dbReference type="RefSeq" id="WP_000055753.1">
    <property type="nucleotide sequence ID" value="NC_006905.1"/>
</dbReference>
<dbReference type="SMR" id="Q57T23"/>
<dbReference type="KEGG" id="sec:SCH_0232"/>
<dbReference type="HOGENOM" id="CLU_015486_0_2_6"/>
<dbReference type="UniPathway" id="UPA00655">
    <property type="reaction ID" value="UER00711"/>
</dbReference>
<dbReference type="Proteomes" id="UP000000538">
    <property type="component" value="Chromosome"/>
</dbReference>
<dbReference type="GO" id="GO:0009317">
    <property type="term" value="C:acetyl-CoA carboxylase complex"/>
    <property type="evidence" value="ECO:0007669"/>
    <property type="project" value="InterPro"/>
</dbReference>
<dbReference type="GO" id="GO:0003989">
    <property type="term" value="F:acetyl-CoA carboxylase activity"/>
    <property type="evidence" value="ECO:0007669"/>
    <property type="project" value="InterPro"/>
</dbReference>
<dbReference type="GO" id="GO:0005524">
    <property type="term" value="F:ATP binding"/>
    <property type="evidence" value="ECO:0007669"/>
    <property type="project" value="UniProtKB-KW"/>
</dbReference>
<dbReference type="GO" id="GO:0016743">
    <property type="term" value="F:carboxyl- or carbamoyltransferase activity"/>
    <property type="evidence" value="ECO:0007669"/>
    <property type="project" value="UniProtKB-UniRule"/>
</dbReference>
<dbReference type="GO" id="GO:0006633">
    <property type="term" value="P:fatty acid biosynthetic process"/>
    <property type="evidence" value="ECO:0007669"/>
    <property type="project" value="UniProtKB-KW"/>
</dbReference>
<dbReference type="GO" id="GO:2001295">
    <property type="term" value="P:malonyl-CoA biosynthetic process"/>
    <property type="evidence" value="ECO:0007669"/>
    <property type="project" value="UniProtKB-UniRule"/>
</dbReference>
<dbReference type="FunFam" id="3.90.226.10:FF:000008">
    <property type="entry name" value="Acetyl-coenzyme A carboxylase carboxyl transferase subunit alpha"/>
    <property type="match status" value="1"/>
</dbReference>
<dbReference type="Gene3D" id="3.90.226.10">
    <property type="entry name" value="2-enoyl-CoA Hydratase, Chain A, domain 1"/>
    <property type="match status" value="1"/>
</dbReference>
<dbReference type="HAMAP" id="MF_00823">
    <property type="entry name" value="AcetylCoA_CT_alpha"/>
    <property type="match status" value="1"/>
</dbReference>
<dbReference type="InterPro" id="IPR001095">
    <property type="entry name" value="Acetyl_CoA_COase_a_su"/>
</dbReference>
<dbReference type="InterPro" id="IPR029045">
    <property type="entry name" value="ClpP/crotonase-like_dom_sf"/>
</dbReference>
<dbReference type="InterPro" id="IPR011763">
    <property type="entry name" value="COA_CT_C"/>
</dbReference>
<dbReference type="NCBIfam" id="TIGR00513">
    <property type="entry name" value="accA"/>
    <property type="match status" value="1"/>
</dbReference>
<dbReference type="NCBIfam" id="NF041504">
    <property type="entry name" value="AccA_sub"/>
    <property type="match status" value="1"/>
</dbReference>
<dbReference type="NCBIfam" id="NF004344">
    <property type="entry name" value="PRK05724.1"/>
    <property type="match status" value="1"/>
</dbReference>
<dbReference type="PANTHER" id="PTHR42853">
    <property type="entry name" value="ACETYL-COENZYME A CARBOXYLASE CARBOXYL TRANSFERASE SUBUNIT ALPHA"/>
    <property type="match status" value="1"/>
</dbReference>
<dbReference type="PANTHER" id="PTHR42853:SF3">
    <property type="entry name" value="ACETYL-COENZYME A CARBOXYLASE CARBOXYL TRANSFERASE SUBUNIT ALPHA, CHLOROPLASTIC"/>
    <property type="match status" value="1"/>
</dbReference>
<dbReference type="Pfam" id="PF03255">
    <property type="entry name" value="ACCA"/>
    <property type="match status" value="1"/>
</dbReference>
<dbReference type="PRINTS" id="PR01069">
    <property type="entry name" value="ACCCTRFRASEA"/>
</dbReference>
<dbReference type="SUPFAM" id="SSF52096">
    <property type="entry name" value="ClpP/crotonase"/>
    <property type="match status" value="1"/>
</dbReference>
<dbReference type="PROSITE" id="PS50989">
    <property type="entry name" value="COA_CT_CTER"/>
    <property type="match status" value="1"/>
</dbReference>
<reference key="1">
    <citation type="journal article" date="2005" name="Nucleic Acids Res.">
        <title>The genome sequence of Salmonella enterica serovar Choleraesuis, a highly invasive and resistant zoonotic pathogen.</title>
        <authorList>
            <person name="Chiu C.-H."/>
            <person name="Tang P."/>
            <person name="Chu C."/>
            <person name="Hu S."/>
            <person name="Bao Q."/>
            <person name="Yu J."/>
            <person name="Chou Y.-Y."/>
            <person name="Wang H.-S."/>
            <person name="Lee Y.-S."/>
        </authorList>
    </citation>
    <scope>NUCLEOTIDE SEQUENCE [LARGE SCALE GENOMIC DNA]</scope>
    <source>
        <strain>SC-B67</strain>
    </source>
</reference>
<proteinExistence type="inferred from homology"/>
<sequence>MSLNFLDFEQPIAELEAKIDSLTAVSRQDEKLDINIDEEVHRLREKSVELTRKIFADLGAWQVAQLARHPQRPYTLDYVRLAFDEFDELAGDRAYADDKAIVGGIARLEGRPVMIIGHQKGRETKEKIRRNFGMPAPEGYRKALRLMEMAERFNMPIITFIDTPGAYPGVGAEERGQSEAIARNLREMSRLNVPVICTVIGEGGSGGALAIGVGDKVNMLQYSTYSVISPEGCASILWKSADKAPLAAEAMGIIAPRLKELKLIDSIIPEPLGGAHRNPEAMAASLKAQLLEDLADLDVLSTDDLKNRRYQRLMSYGYA</sequence>
<comment type="function">
    <text evidence="1">Component of the acetyl coenzyme A carboxylase (ACC) complex. First, biotin carboxylase catalyzes the carboxylation of biotin on its carrier protein (BCCP) and then the CO(2) group is transferred by the carboxyltransferase to acetyl-CoA to form malonyl-CoA.</text>
</comment>
<comment type="catalytic activity">
    <reaction evidence="1">
        <text>N(6)-carboxybiotinyl-L-lysyl-[protein] + acetyl-CoA = N(6)-biotinyl-L-lysyl-[protein] + malonyl-CoA</text>
        <dbReference type="Rhea" id="RHEA:54728"/>
        <dbReference type="Rhea" id="RHEA-COMP:10505"/>
        <dbReference type="Rhea" id="RHEA-COMP:10506"/>
        <dbReference type="ChEBI" id="CHEBI:57288"/>
        <dbReference type="ChEBI" id="CHEBI:57384"/>
        <dbReference type="ChEBI" id="CHEBI:83144"/>
        <dbReference type="ChEBI" id="CHEBI:83145"/>
        <dbReference type="EC" id="2.1.3.15"/>
    </reaction>
</comment>
<comment type="pathway">
    <text evidence="1">Lipid metabolism; malonyl-CoA biosynthesis; malonyl-CoA from acetyl-CoA: step 1/1.</text>
</comment>
<comment type="subunit">
    <text evidence="1">Acetyl-CoA carboxylase is a heterohexamer composed of biotin carboxyl carrier protein (AccB), biotin carboxylase (AccC) and two subunits each of ACCase subunit alpha (AccA) and ACCase subunit beta (AccD).</text>
</comment>
<comment type="subcellular location">
    <subcellularLocation>
        <location evidence="1">Cytoplasm</location>
    </subcellularLocation>
</comment>
<comment type="similarity">
    <text evidence="1">Belongs to the AccA family.</text>
</comment>
<evidence type="ECO:0000255" key="1">
    <source>
        <dbReference type="HAMAP-Rule" id="MF_00823"/>
    </source>
</evidence>
<evidence type="ECO:0000255" key="2">
    <source>
        <dbReference type="PROSITE-ProRule" id="PRU01137"/>
    </source>
</evidence>